<proteinExistence type="inferred from homology"/>
<accession>Q8XHL7</accession>
<evidence type="ECO:0000255" key="1">
    <source>
        <dbReference type="HAMAP-Rule" id="MF_00105"/>
    </source>
</evidence>
<name>GREA_CLOPE</name>
<feature type="chain" id="PRO_0000176920" description="Transcription elongation factor GreA">
    <location>
        <begin position="1"/>
        <end position="158"/>
    </location>
</feature>
<feature type="coiled-coil region" evidence="1">
    <location>
        <begin position="47"/>
        <end position="74"/>
    </location>
</feature>
<sequence length="158" mass="17660">MSEKKHIMTYEGVKKLEDELEYLKTVKRKEITEKIKVALGYGDLSENSEYDEAKNEQAFTEGRIIQLENMLKNAVVVDESEISTDIVTVGSIVKVMDFDFDEEVEYSIVGSAEADPMNFKISNESPVGEGLMGKKVGDVVEIEVPGGTTKFEVLGIRR</sequence>
<reference key="1">
    <citation type="journal article" date="2002" name="Proc. Natl. Acad. Sci. U.S.A.">
        <title>Complete genome sequence of Clostridium perfringens, an anaerobic flesh-eater.</title>
        <authorList>
            <person name="Shimizu T."/>
            <person name="Ohtani K."/>
            <person name="Hirakawa H."/>
            <person name="Ohshima K."/>
            <person name="Yamashita A."/>
            <person name="Shiba T."/>
            <person name="Ogasawara N."/>
            <person name="Hattori M."/>
            <person name="Kuhara S."/>
            <person name="Hayashi H."/>
        </authorList>
    </citation>
    <scope>NUCLEOTIDE SEQUENCE [LARGE SCALE GENOMIC DNA]</scope>
    <source>
        <strain>13 / Type A</strain>
    </source>
</reference>
<gene>
    <name evidence="1" type="primary">greA</name>
    <name type="ordered locus">CPE2466</name>
</gene>
<dbReference type="EMBL" id="BA000016">
    <property type="protein sequence ID" value="BAB82172.1"/>
    <property type="molecule type" value="Genomic_DNA"/>
</dbReference>
<dbReference type="RefSeq" id="WP_003450338.1">
    <property type="nucleotide sequence ID" value="NC_003366.1"/>
</dbReference>
<dbReference type="SMR" id="Q8XHL7"/>
<dbReference type="STRING" id="195102.gene:10491793"/>
<dbReference type="GeneID" id="93000937"/>
<dbReference type="KEGG" id="cpe:CPE2466"/>
<dbReference type="HOGENOM" id="CLU_101379_2_1_9"/>
<dbReference type="Proteomes" id="UP000000818">
    <property type="component" value="Chromosome"/>
</dbReference>
<dbReference type="GO" id="GO:0003677">
    <property type="term" value="F:DNA binding"/>
    <property type="evidence" value="ECO:0007669"/>
    <property type="project" value="UniProtKB-UniRule"/>
</dbReference>
<dbReference type="GO" id="GO:0070063">
    <property type="term" value="F:RNA polymerase binding"/>
    <property type="evidence" value="ECO:0007669"/>
    <property type="project" value="InterPro"/>
</dbReference>
<dbReference type="GO" id="GO:0006354">
    <property type="term" value="P:DNA-templated transcription elongation"/>
    <property type="evidence" value="ECO:0007669"/>
    <property type="project" value="TreeGrafter"/>
</dbReference>
<dbReference type="GO" id="GO:0032784">
    <property type="term" value="P:regulation of DNA-templated transcription elongation"/>
    <property type="evidence" value="ECO:0007669"/>
    <property type="project" value="UniProtKB-UniRule"/>
</dbReference>
<dbReference type="FunFam" id="1.10.287.180:FF:000001">
    <property type="entry name" value="Transcription elongation factor GreA"/>
    <property type="match status" value="1"/>
</dbReference>
<dbReference type="FunFam" id="3.10.50.30:FF:000001">
    <property type="entry name" value="Transcription elongation factor GreA"/>
    <property type="match status" value="1"/>
</dbReference>
<dbReference type="Gene3D" id="3.10.50.30">
    <property type="entry name" value="Transcription elongation factor, GreA/GreB, C-terminal domain"/>
    <property type="match status" value="1"/>
</dbReference>
<dbReference type="Gene3D" id="1.10.287.180">
    <property type="entry name" value="Transcription elongation factor, GreA/GreB, N-terminal domain"/>
    <property type="match status" value="1"/>
</dbReference>
<dbReference type="HAMAP" id="MF_00105">
    <property type="entry name" value="GreA_GreB"/>
    <property type="match status" value="1"/>
</dbReference>
<dbReference type="InterPro" id="IPR036953">
    <property type="entry name" value="GreA/GreB_C_sf"/>
</dbReference>
<dbReference type="InterPro" id="IPR018151">
    <property type="entry name" value="TF_GreA/GreB_CS"/>
</dbReference>
<dbReference type="InterPro" id="IPR006359">
    <property type="entry name" value="Tscrpt_elong_fac_GreA"/>
</dbReference>
<dbReference type="InterPro" id="IPR028624">
    <property type="entry name" value="Tscrpt_elong_fac_GreA/B"/>
</dbReference>
<dbReference type="InterPro" id="IPR001437">
    <property type="entry name" value="Tscrpt_elong_fac_GreA/B_C"/>
</dbReference>
<dbReference type="InterPro" id="IPR023459">
    <property type="entry name" value="Tscrpt_elong_fac_GreA/B_fam"/>
</dbReference>
<dbReference type="InterPro" id="IPR022691">
    <property type="entry name" value="Tscrpt_elong_fac_GreA/B_N"/>
</dbReference>
<dbReference type="InterPro" id="IPR036805">
    <property type="entry name" value="Tscrpt_elong_fac_GreA/B_N_sf"/>
</dbReference>
<dbReference type="NCBIfam" id="TIGR01462">
    <property type="entry name" value="greA"/>
    <property type="match status" value="1"/>
</dbReference>
<dbReference type="NCBIfam" id="NF001261">
    <property type="entry name" value="PRK00226.1-2"/>
    <property type="match status" value="1"/>
</dbReference>
<dbReference type="NCBIfam" id="NF001263">
    <property type="entry name" value="PRK00226.1-4"/>
    <property type="match status" value="1"/>
</dbReference>
<dbReference type="PANTHER" id="PTHR30437">
    <property type="entry name" value="TRANSCRIPTION ELONGATION FACTOR GREA"/>
    <property type="match status" value="1"/>
</dbReference>
<dbReference type="PANTHER" id="PTHR30437:SF4">
    <property type="entry name" value="TRANSCRIPTION ELONGATION FACTOR GREA"/>
    <property type="match status" value="1"/>
</dbReference>
<dbReference type="Pfam" id="PF01272">
    <property type="entry name" value="GreA_GreB"/>
    <property type="match status" value="1"/>
</dbReference>
<dbReference type="Pfam" id="PF03449">
    <property type="entry name" value="GreA_GreB_N"/>
    <property type="match status" value="1"/>
</dbReference>
<dbReference type="PIRSF" id="PIRSF006092">
    <property type="entry name" value="GreA_GreB"/>
    <property type="match status" value="1"/>
</dbReference>
<dbReference type="SUPFAM" id="SSF54534">
    <property type="entry name" value="FKBP-like"/>
    <property type="match status" value="1"/>
</dbReference>
<dbReference type="SUPFAM" id="SSF46557">
    <property type="entry name" value="GreA transcript cleavage protein, N-terminal domain"/>
    <property type="match status" value="1"/>
</dbReference>
<dbReference type="PROSITE" id="PS00829">
    <property type="entry name" value="GREAB_1"/>
    <property type="match status" value="1"/>
</dbReference>
<keyword id="KW-0175">Coiled coil</keyword>
<keyword id="KW-0238">DNA-binding</keyword>
<keyword id="KW-1185">Reference proteome</keyword>
<keyword id="KW-0804">Transcription</keyword>
<keyword id="KW-0805">Transcription regulation</keyword>
<comment type="function">
    <text evidence="1">Necessary for efficient RNA polymerase transcription elongation past template-encoded arresting sites. The arresting sites in DNA have the property of trapping a certain fraction of elongating RNA polymerases that pass through, resulting in locked ternary complexes. Cleavage of the nascent transcript by cleavage factors such as GreA or GreB allows the resumption of elongation from the new 3'terminus. GreA releases sequences of 2 to 3 nucleotides.</text>
</comment>
<comment type="similarity">
    <text evidence="1">Belongs to the GreA/GreB family.</text>
</comment>
<protein>
    <recommendedName>
        <fullName evidence="1">Transcription elongation factor GreA</fullName>
    </recommendedName>
    <alternativeName>
        <fullName evidence="1">Transcript cleavage factor GreA</fullName>
    </alternativeName>
</protein>
<organism>
    <name type="scientific">Clostridium perfringens (strain 13 / Type A)</name>
    <dbReference type="NCBI Taxonomy" id="195102"/>
    <lineage>
        <taxon>Bacteria</taxon>
        <taxon>Bacillati</taxon>
        <taxon>Bacillota</taxon>
        <taxon>Clostridia</taxon>
        <taxon>Eubacteriales</taxon>
        <taxon>Clostridiaceae</taxon>
        <taxon>Clostridium</taxon>
    </lineage>
</organism>